<feature type="chain" id="PRO_1000190814" description="Elongation factor 4">
    <location>
        <begin position="1"/>
        <end position="597"/>
    </location>
</feature>
<feature type="domain" description="tr-type G">
    <location>
        <begin position="2"/>
        <end position="184"/>
    </location>
</feature>
<feature type="binding site" evidence="1">
    <location>
        <begin position="14"/>
        <end position="19"/>
    </location>
    <ligand>
        <name>GTP</name>
        <dbReference type="ChEBI" id="CHEBI:37565"/>
    </ligand>
</feature>
<feature type="binding site" evidence="1">
    <location>
        <begin position="131"/>
        <end position="134"/>
    </location>
    <ligand>
        <name>GTP</name>
        <dbReference type="ChEBI" id="CHEBI:37565"/>
    </ligand>
</feature>
<organism>
    <name type="scientific">Laribacter hongkongensis (strain HLHK9)</name>
    <dbReference type="NCBI Taxonomy" id="557598"/>
    <lineage>
        <taxon>Bacteria</taxon>
        <taxon>Pseudomonadati</taxon>
        <taxon>Pseudomonadota</taxon>
        <taxon>Betaproteobacteria</taxon>
        <taxon>Neisseriales</taxon>
        <taxon>Aquaspirillaceae</taxon>
        <taxon>Laribacter</taxon>
    </lineage>
</organism>
<comment type="function">
    <text evidence="1">Required for accurate and efficient protein synthesis under certain stress conditions. May act as a fidelity factor of the translation reaction, by catalyzing a one-codon backward translocation of tRNAs on improperly translocated ribosomes. Back-translocation proceeds from a post-translocation (POST) complex to a pre-translocation (PRE) complex, thus giving elongation factor G a second chance to translocate the tRNAs correctly. Binds to ribosomes in a GTP-dependent manner.</text>
</comment>
<comment type="catalytic activity">
    <reaction evidence="1">
        <text>GTP + H2O = GDP + phosphate + H(+)</text>
        <dbReference type="Rhea" id="RHEA:19669"/>
        <dbReference type="ChEBI" id="CHEBI:15377"/>
        <dbReference type="ChEBI" id="CHEBI:15378"/>
        <dbReference type="ChEBI" id="CHEBI:37565"/>
        <dbReference type="ChEBI" id="CHEBI:43474"/>
        <dbReference type="ChEBI" id="CHEBI:58189"/>
        <dbReference type="EC" id="3.6.5.n1"/>
    </reaction>
</comment>
<comment type="subcellular location">
    <subcellularLocation>
        <location evidence="1">Cell inner membrane</location>
        <topology evidence="1">Peripheral membrane protein</topology>
        <orientation evidence="1">Cytoplasmic side</orientation>
    </subcellularLocation>
</comment>
<comment type="similarity">
    <text evidence="1">Belongs to the TRAFAC class translation factor GTPase superfamily. Classic translation factor GTPase family. LepA subfamily.</text>
</comment>
<keyword id="KW-0997">Cell inner membrane</keyword>
<keyword id="KW-1003">Cell membrane</keyword>
<keyword id="KW-0342">GTP-binding</keyword>
<keyword id="KW-0378">Hydrolase</keyword>
<keyword id="KW-0472">Membrane</keyword>
<keyword id="KW-0547">Nucleotide-binding</keyword>
<keyword id="KW-0648">Protein biosynthesis</keyword>
<keyword id="KW-1185">Reference proteome</keyword>
<protein>
    <recommendedName>
        <fullName evidence="1">Elongation factor 4</fullName>
        <shortName evidence="1">EF-4</shortName>
        <ecNumber evidence="1">3.6.5.n1</ecNumber>
    </recommendedName>
    <alternativeName>
        <fullName evidence="1">Ribosomal back-translocase LepA</fullName>
    </alternativeName>
</protein>
<dbReference type="EC" id="3.6.5.n1" evidence="1"/>
<dbReference type="EMBL" id="CP001154">
    <property type="protein sequence ID" value="ACO74452.1"/>
    <property type="molecule type" value="Genomic_DNA"/>
</dbReference>
<dbReference type="RefSeq" id="WP_012696938.1">
    <property type="nucleotide sequence ID" value="NC_012559.1"/>
</dbReference>
<dbReference type="SMR" id="C1D7L2"/>
<dbReference type="STRING" id="557598.LHK_01463"/>
<dbReference type="KEGG" id="lhk:LHK_01463"/>
<dbReference type="eggNOG" id="COG0481">
    <property type="taxonomic scope" value="Bacteria"/>
</dbReference>
<dbReference type="HOGENOM" id="CLU_009995_3_3_4"/>
<dbReference type="Proteomes" id="UP000002010">
    <property type="component" value="Chromosome"/>
</dbReference>
<dbReference type="GO" id="GO:0005886">
    <property type="term" value="C:plasma membrane"/>
    <property type="evidence" value="ECO:0007669"/>
    <property type="project" value="UniProtKB-SubCell"/>
</dbReference>
<dbReference type="GO" id="GO:0005525">
    <property type="term" value="F:GTP binding"/>
    <property type="evidence" value="ECO:0007669"/>
    <property type="project" value="UniProtKB-UniRule"/>
</dbReference>
<dbReference type="GO" id="GO:0003924">
    <property type="term" value="F:GTPase activity"/>
    <property type="evidence" value="ECO:0007669"/>
    <property type="project" value="UniProtKB-UniRule"/>
</dbReference>
<dbReference type="GO" id="GO:0097216">
    <property type="term" value="F:guanosine tetraphosphate binding"/>
    <property type="evidence" value="ECO:0007669"/>
    <property type="project" value="UniProtKB-ARBA"/>
</dbReference>
<dbReference type="GO" id="GO:0043022">
    <property type="term" value="F:ribosome binding"/>
    <property type="evidence" value="ECO:0007669"/>
    <property type="project" value="UniProtKB-UniRule"/>
</dbReference>
<dbReference type="GO" id="GO:0003746">
    <property type="term" value="F:translation elongation factor activity"/>
    <property type="evidence" value="ECO:0007669"/>
    <property type="project" value="UniProtKB-UniRule"/>
</dbReference>
<dbReference type="GO" id="GO:0045727">
    <property type="term" value="P:positive regulation of translation"/>
    <property type="evidence" value="ECO:0007669"/>
    <property type="project" value="UniProtKB-UniRule"/>
</dbReference>
<dbReference type="CDD" id="cd03699">
    <property type="entry name" value="EF4_II"/>
    <property type="match status" value="1"/>
</dbReference>
<dbReference type="CDD" id="cd16260">
    <property type="entry name" value="EF4_III"/>
    <property type="match status" value="1"/>
</dbReference>
<dbReference type="CDD" id="cd01890">
    <property type="entry name" value="LepA"/>
    <property type="match status" value="1"/>
</dbReference>
<dbReference type="CDD" id="cd03709">
    <property type="entry name" value="lepA_C"/>
    <property type="match status" value="1"/>
</dbReference>
<dbReference type="FunFam" id="3.40.50.300:FF:000078">
    <property type="entry name" value="Elongation factor 4"/>
    <property type="match status" value="1"/>
</dbReference>
<dbReference type="FunFam" id="2.40.30.10:FF:000015">
    <property type="entry name" value="Translation factor GUF1, mitochondrial"/>
    <property type="match status" value="1"/>
</dbReference>
<dbReference type="FunFam" id="3.30.70.240:FF:000007">
    <property type="entry name" value="Translation factor GUF1, mitochondrial"/>
    <property type="match status" value="1"/>
</dbReference>
<dbReference type="FunFam" id="3.30.70.2570:FF:000001">
    <property type="entry name" value="Translation factor GUF1, mitochondrial"/>
    <property type="match status" value="1"/>
</dbReference>
<dbReference type="FunFam" id="3.30.70.870:FF:000004">
    <property type="entry name" value="Translation factor GUF1, mitochondrial"/>
    <property type="match status" value="1"/>
</dbReference>
<dbReference type="Gene3D" id="3.30.70.240">
    <property type="match status" value="1"/>
</dbReference>
<dbReference type="Gene3D" id="3.30.70.2570">
    <property type="entry name" value="Elongation factor 4, C-terminal domain"/>
    <property type="match status" value="1"/>
</dbReference>
<dbReference type="Gene3D" id="3.30.70.870">
    <property type="entry name" value="Elongation Factor G (Translational Gtpase), domain 3"/>
    <property type="match status" value="1"/>
</dbReference>
<dbReference type="Gene3D" id="3.40.50.300">
    <property type="entry name" value="P-loop containing nucleotide triphosphate hydrolases"/>
    <property type="match status" value="1"/>
</dbReference>
<dbReference type="Gene3D" id="2.40.30.10">
    <property type="entry name" value="Translation factors"/>
    <property type="match status" value="1"/>
</dbReference>
<dbReference type="HAMAP" id="MF_00071">
    <property type="entry name" value="LepA"/>
    <property type="match status" value="1"/>
</dbReference>
<dbReference type="InterPro" id="IPR006297">
    <property type="entry name" value="EF-4"/>
</dbReference>
<dbReference type="InterPro" id="IPR035647">
    <property type="entry name" value="EFG_III/V"/>
</dbReference>
<dbReference type="InterPro" id="IPR000640">
    <property type="entry name" value="EFG_V-like"/>
</dbReference>
<dbReference type="InterPro" id="IPR004161">
    <property type="entry name" value="EFTu-like_2"/>
</dbReference>
<dbReference type="InterPro" id="IPR031157">
    <property type="entry name" value="G_TR_CS"/>
</dbReference>
<dbReference type="InterPro" id="IPR038363">
    <property type="entry name" value="LepA_C_sf"/>
</dbReference>
<dbReference type="InterPro" id="IPR013842">
    <property type="entry name" value="LepA_CTD"/>
</dbReference>
<dbReference type="InterPro" id="IPR035654">
    <property type="entry name" value="LepA_IV"/>
</dbReference>
<dbReference type="InterPro" id="IPR027417">
    <property type="entry name" value="P-loop_NTPase"/>
</dbReference>
<dbReference type="InterPro" id="IPR005225">
    <property type="entry name" value="Small_GTP-bd"/>
</dbReference>
<dbReference type="InterPro" id="IPR000795">
    <property type="entry name" value="T_Tr_GTP-bd_dom"/>
</dbReference>
<dbReference type="InterPro" id="IPR009000">
    <property type="entry name" value="Transl_B-barrel_sf"/>
</dbReference>
<dbReference type="NCBIfam" id="TIGR01393">
    <property type="entry name" value="lepA"/>
    <property type="match status" value="1"/>
</dbReference>
<dbReference type="NCBIfam" id="TIGR00231">
    <property type="entry name" value="small_GTP"/>
    <property type="match status" value="1"/>
</dbReference>
<dbReference type="PANTHER" id="PTHR43512:SF4">
    <property type="entry name" value="TRANSLATION FACTOR GUF1 HOMOLOG, CHLOROPLASTIC"/>
    <property type="match status" value="1"/>
</dbReference>
<dbReference type="PANTHER" id="PTHR43512">
    <property type="entry name" value="TRANSLATION FACTOR GUF1-RELATED"/>
    <property type="match status" value="1"/>
</dbReference>
<dbReference type="Pfam" id="PF00679">
    <property type="entry name" value="EFG_C"/>
    <property type="match status" value="1"/>
</dbReference>
<dbReference type="Pfam" id="PF00009">
    <property type="entry name" value="GTP_EFTU"/>
    <property type="match status" value="1"/>
</dbReference>
<dbReference type="Pfam" id="PF03144">
    <property type="entry name" value="GTP_EFTU_D2"/>
    <property type="match status" value="1"/>
</dbReference>
<dbReference type="Pfam" id="PF06421">
    <property type="entry name" value="LepA_C"/>
    <property type="match status" value="1"/>
</dbReference>
<dbReference type="PRINTS" id="PR00315">
    <property type="entry name" value="ELONGATNFCT"/>
</dbReference>
<dbReference type="SUPFAM" id="SSF54980">
    <property type="entry name" value="EF-G C-terminal domain-like"/>
    <property type="match status" value="2"/>
</dbReference>
<dbReference type="SUPFAM" id="SSF52540">
    <property type="entry name" value="P-loop containing nucleoside triphosphate hydrolases"/>
    <property type="match status" value="1"/>
</dbReference>
<dbReference type="SUPFAM" id="SSF50447">
    <property type="entry name" value="Translation proteins"/>
    <property type="match status" value="1"/>
</dbReference>
<dbReference type="PROSITE" id="PS00301">
    <property type="entry name" value="G_TR_1"/>
    <property type="match status" value="1"/>
</dbReference>
<dbReference type="PROSITE" id="PS51722">
    <property type="entry name" value="G_TR_2"/>
    <property type="match status" value="1"/>
</dbReference>
<sequence>MKNIRNFSIIAHIDHGKSTLADRFIQYCGGLEMREMSEQVLDSMDIEKERGITIKAQTAALSYKARDGQVYHLNLIDTPGHVDFSYEVSRSLSACEGALLVVDASQGVEAQTVANCYTAIELGVEVVPVLNKIDLPAAEPERVSQEIEDIIGIEAIDAVRASAKSGIGIEDILETVVQKIPAPKGDADAPLKALIIDSWFDNYVGVVMLVRLVDGAVKPKDKIKFMATGAEHLVEQVGVFTPKSVQRSELRAGEVGFIIAGIKELKSAKVGDTITQVARPAAEALPGFKEVQSQVFAGLYPVESHDYDNLRDALEKLQLNDASLKFEPEVSQALGFGFRCGFLGLLHLEIVQERLEREFDMDLITTAPTVVYELLLKDGTVIEVENPSKLPDPSKIEEIREPIITSTILVPQDYVGAVMTLCNQKRGVQVNMQYMGRQVMLTYDLPMNEVVMDFFDKLKSTSRGYASLDYEFKCFQASDLVKLDVMVNGEKVDALSLIVHRQNAIYRGRELVSKMRELIPRQMFDIAVQAAIGNNIIARETVKALRKNVLAKCYGGDITRKKKLLEKQKAGKRRMKQVGNVEIPQEAFLAILQVSDK</sequence>
<name>LEPA_LARHH</name>
<proteinExistence type="inferred from homology"/>
<reference key="1">
    <citation type="journal article" date="2009" name="PLoS Genet.">
        <title>The complete genome and proteome of Laribacter hongkongensis reveal potential mechanisms for adaptations to different temperatures and habitats.</title>
        <authorList>
            <person name="Woo P.C.Y."/>
            <person name="Lau S.K.P."/>
            <person name="Tse H."/>
            <person name="Teng J.L.L."/>
            <person name="Curreem S.O."/>
            <person name="Tsang A.K.L."/>
            <person name="Fan R.Y.Y."/>
            <person name="Wong G.K.M."/>
            <person name="Huang Y."/>
            <person name="Loman N.J."/>
            <person name="Snyder L.A.S."/>
            <person name="Cai J.J."/>
            <person name="Huang J.-D."/>
            <person name="Mak W."/>
            <person name="Pallen M.J."/>
            <person name="Lok S."/>
            <person name="Yuen K.-Y."/>
        </authorList>
    </citation>
    <scope>NUCLEOTIDE SEQUENCE [LARGE SCALE GENOMIC DNA]</scope>
    <source>
        <strain>HLHK9</strain>
    </source>
</reference>
<gene>
    <name evidence="1" type="primary">lepA</name>
    <name type="ordered locus">LHK_01463</name>
</gene>
<accession>C1D7L2</accession>
<evidence type="ECO:0000255" key="1">
    <source>
        <dbReference type="HAMAP-Rule" id="MF_00071"/>
    </source>
</evidence>